<comment type="function">
    <text evidence="4 5">Involved in very long chain fatty acids (VLCFA) omega-hydroxylation. Required for the synthesis of saturated VLCFA alpha, omega-bifunctional suberin monomers.</text>
</comment>
<comment type="cofactor">
    <cofactor evidence="1">
        <name>heme</name>
        <dbReference type="ChEBI" id="CHEBI:30413"/>
    </cofactor>
</comment>
<comment type="subcellular location">
    <subcellularLocation>
        <location evidence="3 4">Endoplasmic reticulum membrane</location>
        <topology evidence="3 4">Single-pass membrane protein</topology>
    </subcellularLocation>
    <text>In vitro import assays suggest an association with the outer chloroplastic membrane; also detected in the chloroplasts of guard cells when expressed in a heterologous system.</text>
</comment>
<comment type="tissue specificity">
    <text evidence="4">Expressed in roots endodermis, anthers, stigmas, stomata of young pedicels of inflorescences, the placenta region of siliques, at the level of the hilum in matures seeds, at the junction of siliques to pedicels where abscission of floral parts takes place and in nectary glands.</text>
</comment>
<comment type="disruption phenotype">
    <text evidence="4 5">No visible vegetative growth phenotype. Very large reduction in alpha, omega-bifunctional C22 to C24 saturated suberin components in seeds. No effect on seed coat permeability.</text>
</comment>
<comment type="similarity">
    <text evidence="6">Belongs to the cytochrome P450 family.</text>
</comment>
<keyword id="KW-0961">Cell wall biogenesis/degradation</keyword>
<keyword id="KW-0256">Endoplasmic reticulum</keyword>
<keyword id="KW-0349">Heme</keyword>
<keyword id="KW-0408">Iron</keyword>
<keyword id="KW-0472">Membrane</keyword>
<keyword id="KW-0479">Metal-binding</keyword>
<keyword id="KW-0503">Monooxygenase</keyword>
<keyword id="KW-0560">Oxidoreductase</keyword>
<keyword id="KW-1185">Reference proteome</keyword>
<keyword id="KW-0812">Transmembrane</keyword>
<keyword id="KW-1133">Transmembrane helix</keyword>
<gene>
    <name type="primary">CYP86B1</name>
    <name type="ordered locus">At5g23190</name>
    <name type="ORF">MKD15.5</name>
</gene>
<feature type="chain" id="PRO_0000392058" description="Cytochrome P450 86B1">
    <location>
        <begin position="1"/>
        <end position="559"/>
    </location>
</feature>
<feature type="transmembrane region" description="Helical" evidence="2">
    <location>
        <begin position="31"/>
        <end position="51"/>
    </location>
</feature>
<feature type="binding site" description="axial binding residue" evidence="1">
    <location>
        <position position="488"/>
    </location>
    <ligand>
        <name>heme</name>
        <dbReference type="ChEBI" id="CHEBI:30413"/>
    </ligand>
    <ligandPart>
        <name>Fe</name>
        <dbReference type="ChEBI" id="CHEBI:18248"/>
    </ligandPart>
</feature>
<dbReference type="EC" id="1.14.-.-"/>
<dbReference type="EMBL" id="AF345898">
    <property type="protein sequence ID" value="AAK29622.1"/>
    <property type="molecule type" value="mRNA"/>
</dbReference>
<dbReference type="EMBL" id="BT002045">
    <property type="protein sequence ID" value="AAN72056.1"/>
    <property type="molecule type" value="mRNA"/>
</dbReference>
<dbReference type="EMBL" id="AB007648">
    <property type="protein sequence ID" value="BAB11174.1"/>
    <property type="molecule type" value="Genomic_DNA"/>
</dbReference>
<dbReference type="EMBL" id="CP002688">
    <property type="protein sequence ID" value="AED93131.1"/>
    <property type="molecule type" value="Genomic_DNA"/>
</dbReference>
<dbReference type="RefSeq" id="NP_197710.1">
    <property type="nucleotide sequence ID" value="NM_122225.3"/>
</dbReference>
<dbReference type="SMR" id="Q9FMY1"/>
<dbReference type="FunCoup" id="Q9FMY1">
    <property type="interactions" value="239"/>
</dbReference>
<dbReference type="STRING" id="3702.Q9FMY1"/>
<dbReference type="PaxDb" id="3702-AT5G23190.1"/>
<dbReference type="ProteomicsDB" id="223856"/>
<dbReference type="EnsemblPlants" id="AT5G23190.1">
    <property type="protein sequence ID" value="AT5G23190.1"/>
    <property type="gene ID" value="AT5G23190"/>
</dbReference>
<dbReference type="GeneID" id="832383"/>
<dbReference type="Gramene" id="AT5G23190.1">
    <property type="protein sequence ID" value="AT5G23190.1"/>
    <property type="gene ID" value="AT5G23190"/>
</dbReference>
<dbReference type="KEGG" id="ath:AT5G23190"/>
<dbReference type="Araport" id="AT5G23190"/>
<dbReference type="TAIR" id="AT5G23190">
    <property type="gene designation" value="CYP86B1"/>
</dbReference>
<dbReference type="eggNOG" id="KOG0157">
    <property type="taxonomic scope" value="Eukaryota"/>
</dbReference>
<dbReference type="HOGENOM" id="CLU_001570_27_2_1"/>
<dbReference type="InParanoid" id="Q9FMY1"/>
<dbReference type="OMA" id="AKNPRIW"/>
<dbReference type="PhylomeDB" id="Q9FMY1"/>
<dbReference type="BioCyc" id="ARA:AT5G23190-MONOMER"/>
<dbReference type="BioCyc" id="MetaCyc:AT5G23190-MONOMER"/>
<dbReference type="BRENDA" id="1.14.15.3">
    <property type="organism ID" value="399"/>
</dbReference>
<dbReference type="PRO" id="PR:Q9FMY1"/>
<dbReference type="Proteomes" id="UP000006548">
    <property type="component" value="Chromosome 5"/>
</dbReference>
<dbReference type="ExpressionAtlas" id="Q9FMY1">
    <property type="expression patterns" value="baseline and differential"/>
</dbReference>
<dbReference type="GO" id="GO:0005783">
    <property type="term" value="C:endoplasmic reticulum"/>
    <property type="evidence" value="ECO:0000314"/>
    <property type="project" value="TAIR"/>
</dbReference>
<dbReference type="GO" id="GO:0005789">
    <property type="term" value="C:endoplasmic reticulum membrane"/>
    <property type="evidence" value="ECO:0007669"/>
    <property type="project" value="UniProtKB-SubCell"/>
</dbReference>
<dbReference type="GO" id="GO:0020037">
    <property type="term" value="F:heme binding"/>
    <property type="evidence" value="ECO:0007669"/>
    <property type="project" value="InterPro"/>
</dbReference>
<dbReference type="GO" id="GO:0005506">
    <property type="term" value="F:iron ion binding"/>
    <property type="evidence" value="ECO:0007669"/>
    <property type="project" value="InterPro"/>
</dbReference>
<dbReference type="GO" id="GO:0004497">
    <property type="term" value="F:monooxygenase activity"/>
    <property type="evidence" value="ECO:0007669"/>
    <property type="project" value="UniProtKB-KW"/>
</dbReference>
<dbReference type="GO" id="GO:0016705">
    <property type="term" value="F:oxidoreductase activity, acting on paired donors, with incorporation or reduction of molecular oxygen"/>
    <property type="evidence" value="ECO:0007669"/>
    <property type="project" value="InterPro"/>
</dbReference>
<dbReference type="GO" id="GO:0071555">
    <property type="term" value="P:cell wall organization"/>
    <property type="evidence" value="ECO:0007669"/>
    <property type="project" value="UniProtKB-KW"/>
</dbReference>
<dbReference type="GO" id="GO:0010345">
    <property type="term" value="P:suberin biosynthetic process"/>
    <property type="evidence" value="ECO:0000315"/>
    <property type="project" value="TAIR"/>
</dbReference>
<dbReference type="GO" id="GO:0042761">
    <property type="term" value="P:very long-chain fatty acid biosynthetic process"/>
    <property type="evidence" value="ECO:0000315"/>
    <property type="project" value="TAIR"/>
</dbReference>
<dbReference type="CDD" id="cd11064">
    <property type="entry name" value="CYP86A"/>
    <property type="match status" value="1"/>
</dbReference>
<dbReference type="FunFam" id="1.10.630.10:FF:000044">
    <property type="entry name" value="Cytochrome P450"/>
    <property type="match status" value="1"/>
</dbReference>
<dbReference type="Gene3D" id="1.10.630.10">
    <property type="entry name" value="Cytochrome P450"/>
    <property type="match status" value="1"/>
</dbReference>
<dbReference type="InterPro" id="IPR001128">
    <property type="entry name" value="Cyt_P450"/>
</dbReference>
<dbReference type="InterPro" id="IPR017972">
    <property type="entry name" value="Cyt_P450_CS"/>
</dbReference>
<dbReference type="InterPro" id="IPR002401">
    <property type="entry name" value="Cyt_P450_E_grp-I"/>
</dbReference>
<dbReference type="InterPro" id="IPR036396">
    <property type="entry name" value="Cyt_P450_sf"/>
</dbReference>
<dbReference type="PANTHER" id="PTHR24296">
    <property type="entry name" value="CYTOCHROME P450"/>
    <property type="match status" value="1"/>
</dbReference>
<dbReference type="Pfam" id="PF00067">
    <property type="entry name" value="p450"/>
    <property type="match status" value="1"/>
</dbReference>
<dbReference type="PRINTS" id="PR00463">
    <property type="entry name" value="EP450I"/>
</dbReference>
<dbReference type="PRINTS" id="PR00385">
    <property type="entry name" value="P450"/>
</dbReference>
<dbReference type="SUPFAM" id="SSF48264">
    <property type="entry name" value="Cytochrome P450"/>
    <property type="match status" value="1"/>
</dbReference>
<dbReference type="PROSITE" id="PS00086">
    <property type="entry name" value="CYTOCHROME_P450"/>
    <property type="match status" value="1"/>
</dbReference>
<reference key="1">
    <citation type="journal article" date="2001" name="Plant Cell Physiol.">
        <title>Localization of CYP86B1 in the outer envelope of chloroplasts.</title>
        <authorList>
            <person name="Watson C.J."/>
            <person name="Froehlich J.E."/>
            <person name="Josefsson C.A."/>
            <person name="Chapple C."/>
            <person name="Durst F."/>
            <person name="Benveniste I."/>
            <person name="Coolbaugh R.C."/>
        </authorList>
    </citation>
    <scope>NUCLEOTIDE SEQUENCE [MRNA]</scope>
    <scope>SUBCELLULAR LOCATION</scope>
    <source>
        <tissue>Silique</tissue>
    </source>
</reference>
<reference key="2">
    <citation type="journal article" date="1997" name="DNA Res.">
        <title>Structural analysis of Arabidopsis thaliana chromosome 5. III. Sequence features of the regions of 1,191,918 bp covered by seventeen physically assigned P1 clones.</title>
        <authorList>
            <person name="Nakamura Y."/>
            <person name="Sato S."/>
            <person name="Kaneko T."/>
            <person name="Kotani H."/>
            <person name="Asamizu E."/>
            <person name="Miyajima N."/>
            <person name="Tabata S."/>
        </authorList>
    </citation>
    <scope>NUCLEOTIDE SEQUENCE [LARGE SCALE GENOMIC DNA]</scope>
    <source>
        <strain>cv. Columbia</strain>
    </source>
</reference>
<reference key="3">
    <citation type="journal article" date="2017" name="Plant J.">
        <title>Araport11: a complete reannotation of the Arabidopsis thaliana reference genome.</title>
        <authorList>
            <person name="Cheng C.Y."/>
            <person name="Krishnakumar V."/>
            <person name="Chan A.P."/>
            <person name="Thibaud-Nissen F."/>
            <person name="Schobel S."/>
            <person name="Town C.D."/>
        </authorList>
    </citation>
    <scope>GENOME REANNOTATION</scope>
    <source>
        <strain>cv. Columbia</strain>
    </source>
</reference>
<reference key="4">
    <citation type="journal article" date="2003" name="Science">
        <title>Empirical analysis of transcriptional activity in the Arabidopsis genome.</title>
        <authorList>
            <person name="Yamada K."/>
            <person name="Lim J."/>
            <person name="Dale J.M."/>
            <person name="Chen H."/>
            <person name="Shinn P."/>
            <person name="Palm C.J."/>
            <person name="Southwick A.M."/>
            <person name="Wu H.C."/>
            <person name="Kim C.J."/>
            <person name="Nguyen M."/>
            <person name="Pham P.K."/>
            <person name="Cheuk R.F."/>
            <person name="Karlin-Newmann G."/>
            <person name="Liu S.X."/>
            <person name="Lam B."/>
            <person name="Sakano H."/>
            <person name="Wu T."/>
            <person name="Yu G."/>
            <person name="Miranda M."/>
            <person name="Quach H.L."/>
            <person name="Tripp M."/>
            <person name="Chang C.H."/>
            <person name="Lee J.M."/>
            <person name="Toriumi M.J."/>
            <person name="Chan M.M."/>
            <person name="Tang C.C."/>
            <person name="Onodera C.S."/>
            <person name="Deng J.M."/>
            <person name="Akiyama K."/>
            <person name="Ansari Y."/>
            <person name="Arakawa T."/>
            <person name="Banh J."/>
            <person name="Banno F."/>
            <person name="Bowser L."/>
            <person name="Brooks S.Y."/>
            <person name="Carninci P."/>
            <person name="Chao Q."/>
            <person name="Choy N."/>
            <person name="Enju A."/>
            <person name="Goldsmith A.D."/>
            <person name="Gurjal M."/>
            <person name="Hansen N.F."/>
            <person name="Hayashizaki Y."/>
            <person name="Johnson-Hopson C."/>
            <person name="Hsuan V.W."/>
            <person name="Iida K."/>
            <person name="Karnes M."/>
            <person name="Khan S."/>
            <person name="Koesema E."/>
            <person name="Ishida J."/>
            <person name="Jiang P.X."/>
            <person name="Jones T."/>
            <person name="Kawai J."/>
            <person name="Kamiya A."/>
            <person name="Meyers C."/>
            <person name="Nakajima M."/>
            <person name="Narusaka M."/>
            <person name="Seki M."/>
            <person name="Sakurai T."/>
            <person name="Satou M."/>
            <person name="Tamse R."/>
            <person name="Vaysberg M."/>
            <person name="Wallender E.K."/>
            <person name="Wong C."/>
            <person name="Yamamura Y."/>
            <person name="Yuan S."/>
            <person name="Shinozaki K."/>
            <person name="Davis R.W."/>
            <person name="Theologis A."/>
            <person name="Ecker J.R."/>
        </authorList>
    </citation>
    <scope>NUCLEOTIDE SEQUENCE [LARGE SCALE MRNA]</scope>
    <source>
        <strain>cv. Columbia</strain>
    </source>
</reference>
<reference key="5">
    <citation type="journal article" date="2009" name="Plant Physiol.">
        <title>CYP86B1 is required for very long chain omega-hydroxyacid and alpha, omega -dicarboxylic acid synthesis in root and seed suberin polyester.</title>
        <authorList>
            <person name="Compagnon V."/>
            <person name="Diehl P."/>
            <person name="Benveniste I."/>
            <person name="Meyer D."/>
            <person name="Schaller H."/>
            <person name="Schreiber L."/>
            <person name="Franke R."/>
            <person name="Pinot F."/>
        </authorList>
    </citation>
    <scope>FUNCTION</scope>
    <scope>SUBCELLULAR LOCATION</scope>
    <scope>TISSUE SPECIFICITY</scope>
    <scope>DISRUPTION PHENOTYPE</scope>
</reference>
<reference key="6">
    <citation type="journal article" date="2009" name="Plant Physiol.">
        <title>Identification of an Arabidopsis feruloyl-coenzyme A transferase required for suberin synthesis.</title>
        <authorList>
            <person name="Molina I."/>
            <person name="Li-Beisson Y."/>
            <person name="Beisson F."/>
            <person name="Ohlrogge J.B."/>
            <person name="Pollard M."/>
        </authorList>
    </citation>
    <scope>FUNCTION</scope>
    <scope>DISRUPTION PHENOTYPE</scope>
</reference>
<sequence length="559" mass="64325">MNFNSSYNLTFNDVFFSSSSSSDPLVSRRLFLLRDVQILELLIAIFVFVAIHALRQKKYQGLPVWPFLGMLPSLAFGLRGNIYEWLSDVLCLQNGTFQFRGPWFSSLNSTITCDPRNVEHLLKNRFSVFPKGSYFRDNLRDLLGDGIFNADDETWQRQRKTASIEFHSAKFRQLTTQSLFELVHKRLLPVLETSVKSSSPIDLQDVLLRLTFDNVCMIAFGVDPGCLGPDQPVIPFAKAFEDATEAAVVRFVMPTCVWKFMRYLDIGTEKKLKESIKGVDDFADEVIRTRKKELSLEGETTKRSDLLTVFMGLRDEKGESFSDKFLRDICVNFILAGRDTSSVALSWFFWLLEKNPEVEEKIMVEMCKILRQRDDHGNAEKSDYEPVFGPEEIKKMDYLQAALSEALRLYPSVPVDHKEVQEDDVFPDGTMLKKGDKVIYAIYAMGRMEAIWGKDCLEFRPERWLRDGRFMSESAYKFTAFNGGPRLCLGKDFAYYQMKSTAAAIVYRYKVKVVNGHKVEPKLALTMYMKHGLMVNLINRSVSEIDQYYAKSFDEGYIN</sequence>
<name>C86B1_ARATH</name>
<evidence type="ECO:0000250" key="1"/>
<evidence type="ECO:0000255" key="2"/>
<evidence type="ECO:0000269" key="3">
    <source>
    </source>
</evidence>
<evidence type="ECO:0000269" key="4">
    <source>
    </source>
</evidence>
<evidence type="ECO:0000269" key="5">
    <source>
    </source>
</evidence>
<evidence type="ECO:0000305" key="6"/>
<proteinExistence type="evidence at transcript level"/>
<protein>
    <recommendedName>
        <fullName>Cytochrome P450 86B1</fullName>
        <ecNumber>1.14.-.-</ecNumber>
    </recommendedName>
</protein>
<organism>
    <name type="scientific">Arabidopsis thaliana</name>
    <name type="common">Mouse-ear cress</name>
    <dbReference type="NCBI Taxonomy" id="3702"/>
    <lineage>
        <taxon>Eukaryota</taxon>
        <taxon>Viridiplantae</taxon>
        <taxon>Streptophyta</taxon>
        <taxon>Embryophyta</taxon>
        <taxon>Tracheophyta</taxon>
        <taxon>Spermatophyta</taxon>
        <taxon>Magnoliopsida</taxon>
        <taxon>eudicotyledons</taxon>
        <taxon>Gunneridae</taxon>
        <taxon>Pentapetalae</taxon>
        <taxon>rosids</taxon>
        <taxon>malvids</taxon>
        <taxon>Brassicales</taxon>
        <taxon>Brassicaceae</taxon>
        <taxon>Camelineae</taxon>
        <taxon>Arabidopsis</taxon>
    </lineage>
</organism>
<accession>Q9FMY1</accession>